<proteinExistence type="inferred from homology"/>
<name>CNSM_PENEN</name>
<comment type="function">
    <text evidence="2 3">Alpha-ketoglutarate-dependent dioxygenase; part of the gene cluster that mediates the biosynthesis of communesins, a prominent class of indole alkaloids with great potential as pharmaceuticals (PubMed:25571861). Communesins are biosynthesized by the coupling of tryptamine and aurantioclavine, two building blocks derived from L-tryptophan (PubMed:25571861). The L-tryptophan decarboxylase cnsB converts L-tryptophan to tryptamine, whereas the tryptophan dimethylallyltransferase cnsF converts L-tryptophan to 4-dimethylallyl tryptophan which is further transformed to aurantioclavine by the aurantioclavine synthase cnsA, probably aided by the catalase cnsD (PubMed:25571861). The cytochrome P450 monooxygenase cnsC catalyzes the heterodimeric coupling between the two different indole moieties, tryptamine and aurantioclavine, to construct vicinal quaternary stereocenters and yield the heptacyclic communesin scaffold (PubMed:26963294). The O-methyltransferase cnsE then methylates the communesin scaffold to produce communesin K, the simplest characterized communesin that contains the heptacyclic core (PubMed:25571861). The dioxygenase cnsJ converts communesin K into communesin I (PubMed:25571861). Acylation to introduce the hexadienyl group at position N16 of communesin I by the acyltransferase cnsK leads to the production of communesin B. The hexadienyl group is produced by the highly reducing polyketide synthase cnsI, before being hydrolytically removed from cnsI by the serine hydrolase cnsH, converted into hexadienyl-CoA by the CoA ligase cnsG, and then transferred to communesin I by cnsK (PubMed:25571861). Surprisingly, cnsK may also be a promiscuous acyltransferase that can tolerate a range of acyl groups, including acetyl-, propionyl-, and butyryl-CoA, which lead to communesins A, G and H respectively (PubMed:25571861). The roles of the alpha-ketoglutarate-dependent dioxygenases cnsM and cnsP have still to be determined (PubMed:25571861).</text>
</comment>
<comment type="cofactor">
    <cofactor evidence="1">
        <name>Fe(2+)</name>
        <dbReference type="ChEBI" id="CHEBI:29033"/>
    </cofactor>
    <text evidence="1">Binds 1 Fe(2+) ion per subunit.</text>
</comment>
<comment type="pathway">
    <text evidence="6">Alkaloid biosynthesis.</text>
</comment>
<comment type="similarity">
    <text evidence="5">Belongs to the TfdA dioxygenase family.</text>
</comment>
<reference key="1">
    <citation type="journal article" date="2015" name="Mol. Plant Microbe Interact.">
        <title>Genome, transcriptome, and functional analyses of Penicillium expansum provide new insights into secondary metabolism and pathogenicity.</title>
        <authorList>
            <person name="Ballester A.R."/>
            <person name="Marcet-Houben M."/>
            <person name="Levin E."/>
            <person name="Sela N."/>
            <person name="Selma-Lazaro C."/>
            <person name="Carmona L."/>
            <person name="Wisniewski M."/>
            <person name="Droby S."/>
            <person name="Gonzalez-Candelas L."/>
            <person name="Gabaldon T."/>
        </authorList>
    </citation>
    <scope>NUCLEOTIDE SEQUENCE [LARGE SCALE GENOMIC DNA]</scope>
    <source>
        <strain>MD-8</strain>
    </source>
</reference>
<reference key="2">
    <citation type="journal article" date="2015" name="Angew. Chem. Int. Ed.">
        <title>Elucidation of the concise biosynthetic pathway of the communesin indole alkaloids.</title>
        <authorList>
            <person name="Lin H.C."/>
            <person name="Chiou G."/>
            <person name="Chooi Y.H."/>
            <person name="McMahon T.C."/>
            <person name="Xu W."/>
            <person name="Garg N.K."/>
            <person name="Tang Y."/>
        </authorList>
    </citation>
    <scope>IDENTIFICATION</scope>
    <scope>FUNCTION</scope>
    <scope>PATHWAY</scope>
</reference>
<reference key="3">
    <citation type="journal article" date="2016" name="J. Am. Chem. Soc.">
        <title>P450-mediated coupling of indole fragments to forge communesin and unnatural isomers.</title>
        <authorList>
            <person name="Lin H.C."/>
            <person name="McMahon T.C."/>
            <person name="Patel A."/>
            <person name="Corsello M."/>
            <person name="Simon A."/>
            <person name="Xu W."/>
            <person name="Zhao M."/>
            <person name="Houk K.N."/>
            <person name="Garg N.K."/>
            <person name="Tang Y."/>
        </authorList>
    </citation>
    <scope>FUNCTION</scope>
</reference>
<organism>
    <name type="scientific">Penicillium expansum</name>
    <name type="common">Blue mold rot fungus</name>
    <dbReference type="NCBI Taxonomy" id="27334"/>
    <lineage>
        <taxon>Eukaryota</taxon>
        <taxon>Fungi</taxon>
        <taxon>Dikarya</taxon>
        <taxon>Ascomycota</taxon>
        <taxon>Pezizomycotina</taxon>
        <taxon>Eurotiomycetes</taxon>
        <taxon>Eurotiomycetidae</taxon>
        <taxon>Eurotiales</taxon>
        <taxon>Aspergillaceae</taxon>
        <taxon>Penicillium</taxon>
    </lineage>
</organism>
<keyword id="KW-0223">Dioxygenase</keyword>
<keyword id="KW-0408">Iron</keyword>
<keyword id="KW-0479">Metal-binding</keyword>
<keyword id="KW-0560">Oxidoreductase</keyword>
<keyword id="KW-1185">Reference proteome</keyword>
<feature type="chain" id="PRO_0000446468" description="Alpha-ketoglutarate-dependent dioxygenase cnsM">
    <location>
        <begin position="1"/>
        <end position="359"/>
    </location>
</feature>
<feature type="binding site" evidence="1">
    <location>
        <position position="120"/>
    </location>
    <ligand>
        <name>substrate</name>
    </ligand>
</feature>
<feature type="binding site" evidence="1">
    <location>
        <position position="158"/>
    </location>
    <ligand>
        <name>Fe cation</name>
        <dbReference type="ChEBI" id="CHEBI:24875"/>
        <note>catalytic</note>
    </ligand>
</feature>
<feature type="binding site" evidence="1">
    <location>
        <position position="160"/>
    </location>
    <ligand>
        <name>Fe cation</name>
        <dbReference type="ChEBI" id="CHEBI:24875"/>
        <note>catalytic</note>
    </ligand>
</feature>
<feature type="binding site" evidence="1">
    <location>
        <position position="186"/>
    </location>
    <ligand>
        <name>2-oxoglutarate</name>
        <dbReference type="ChEBI" id="CHEBI:16810"/>
    </ligand>
</feature>
<feature type="binding site" evidence="1">
    <location>
        <position position="311"/>
    </location>
    <ligand>
        <name>Fe cation</name>
        <dbReference type="ChEBI" id="CHEBI:24875"/>
        <note>catalytic</note>
    </ligand>
</feature>
<feature type="binding site" evidence="1">
    <location>
        <position position="323"/>
    </location>
    <ligand>
        <name>2-oxoglutarate</name>
        <dbReference type="ChEBI" id="CHEBI:16810"/>
    </ligand>
</feature>
<feature type="binding site" evidence="1">
    <location>
        <position position="327"/>
    </location>
    <ligand>
        <name>2-oxoglutarate</name>
        <dbReference type="ChEBI" id="CHEBI:16810"/>
    </ligand>
</feature>
<feature type="binding site" evidence="1">
    <location>
        <position position="327"/>
    </location>
    <ligand>
        <name>substrate</name>
    </ligand>
</feature>
<gene>
    <name evidence="4" type="primary">cnsM</name>
    <name type="ORF">PEX2_055470</name>
</gene>
<evidence type="ECO:0000250" key="1">
    <source>
        <dbReference type="UniProtKB" id="P37610"/>
    </source>
</evidence>
<evidence type="ECO:0000269" key="2">
    <source>
    </source>
</evidence>
<evidence type="ECO:0000269" key="3">
    <source>
    </source>
</evidence>
<evidence type="ECO:0000303" key="4">
    <source>
    </source>
</evidence>
<evidence type="ECO:0000305" key="5"/>
<evidence type="ECO:0000305" key="6">
    <source>
    </source>
</evidence>
<sequence length="359" mass="40618">MVSETVEANGPLYPDYLPFYDPLEKVEMVGPFEHDDPGHRADPSFPNLLEKATNVLELSPHCGTELQGVQISELSTQGLDELALMVAERGCLVFRDQDFTNLGFEKQKEIASHFGPLHKHGWMPHPKNGPEEFVIVYDSKDDLRIRKSWARKSPIQFHVDQSPESQPPGATFFCMLESPPGAGGDTVISNMARAFDRLSPSFRKRLEGLKAVHTTANPIMREIRDNGPDSVLRRPITRTIHPVVVVHPVTKRKALFVNSSYTQSIVGWDEEESDYMLKFLFDHINRGHDFCCRVRYEPGTVVIWDQRVTQHSQTLDYSAGSRRHAFRLTPLANVPIPSLIEEDDGECAKDEGRMLLNLC</sequence>
<accession>A0A0A2J5V5</accession>
<dbReference type="EC" id="1.14.11.-"/>
<dbReference type="EMBL" id="JQFZ01000090">
    <property type="protein sequence ID" value="KGO59706.1"/>
    <property type="molecule type" value="Genomic_DNA"/>
</dbReference>
<dbReference type="RefSeq" id="XP_016600819.1">
    <property type="nucleotide sequence ID" value="XM_016742821.1"/>
</dbReference>
<dbReference type="SMR" id="A0A0A2J5V5"/>
<dbReference type="STRING" id="27334.A0A0A2J5V5"/>
<dbReference type="GeneID" id="27678240"/>
<dbReference type="VEuPathDB" id="FungiDB:PEXP_030580"/>
<dbReference type="HOGENOM" id="CLU_036005_0_0_1"/>
<dbReference type="OrthoDB" id="10257314at2759"/>
<dbReference type="PhylomeDB" id="A0A0A2J5V5"/>
<dbReference type="Proteomes" id="UP000030143">
    <property type="component" value="Unassembled WGS sequence"/>
</dbReference>
<dbReference type="GO" id="GO:0005737">
    <property type="term" value="C:cytoplasm"/>
    <property type="evidence" value="ECO:0007669"/>
    <property type="project" value="TreeGrafter"/>
</dbReference>
<dbReference type="GO" id="GO:0016706">
    <property type="term" value="F:2-oxoglutarate-dependent dioxygenase activity"/>
    <property type="evidence" value="ECO:0007669"/>
    <property type="project" value="TreeGrafter"/>
</dbReference>
<dbReference type="GO" id="GO:0046872">
    <property type="term" value="F:metal ion binding"/>
    <property type="evidence" value="ECO:0007669"/>
    <property type="project" value="UniProtKB-KW"/>
</dbReference>
<dbReference type="Gene3D" id="3.60.130.10">
    <property type="entry name" value="Clavaminate synthase-like"/>
    <property type="match status" value="1"/>
</dbReference>
<dbReference type="InterPro" id="IPR051323">
    <property type="entry name" value="AtsK-like"/>
</dbReference>
<dbReference type="InterPro" id="IPR042098">
    <property type="entry name" value="TauD-like_sf"/>
</dbReference>
<dbReference type="InterPro" id="IPR003819">
    <property type="entry name" value="TauD/TfdA-like"/>
</dbReference>
<dbReference type="PANTHER" id="PTHR30468">
    <property type="entry name" value="ALPHA-KETOGLUTARATE-DEPENDENT SULFONATE DIOXYGENASE"/>
    <property type="match status" value="1"/>
</dbReference>
<dbReference type="PANTHER" id="PTHR30468:SF1">
    <property type="entry name" value="ALPHA-KETOGLUTARATE-DEPENDENT SULFONATE DIOXYGENASE"/>
    <property type="match status" value="1"/>
</dbReference>
<dbReference type="Pfam" id="PF02668">
    <property type="entry name" value="TauD"/>
    <property type="match status" value="1"/>
</dbReference>
<dbReference type="SUPFAM" id="SSF51197">
    <property type="entry name" value="Clavaminate synthase-like"/>
    <property type="match status" value="1"/>
</dbReference>
<protein>
    <recommendedName>
        <fullName evidence="4">Alpha-ketoglutarate-dependent dioxygenase cnsM</fullName>
        <ecNumber>1.14.11.-</ecNumber>
    </recommendedName>
    <alternativeName>
        <fullName evidence="4">Communesin biosynthesis cluster protein M</fullName>
    </alternativeName>
</protein>